<organism>
    <name type="scientific">Streptococcus equi subsp. equi (strain 4047)</name>
    <dbReference type="NCBI Taxonomy" id="553482"/>
    <lineage>
        <taxon>Bacteria</taxon>
        <taxon>Bacillati</taxon>
        <taxon>Bacillota</taxon>
        <taxon>Bacilli</taxon>
        <taxon>Lactobacillales</taxon>
        <taxon>Streptococcaceae</taxon>
        <taxon>Streptococcus</taxon>
    </lineage>
</organism>
<name>Y545_STRE4</name>
<keyword id="KW-0963">Cytoplasm</keyword>
<gene>
    <name type="ordered locus">SEQ_0545</name>
</gene>
<proteinExistence type="inferred from homology"/>
<reference key="1">
    <citation type="journal article" date="2009" name="PLoS Pathog.">
        <title>Genomic evidence for the evolution of Streptococcus equi: host restriction, increased virulence, and genetic exchange with human pathogens.</title>
        <authorList>
            <person name="Holden M.T.G."/>
            <person name="Heather Z."/>
            <person name="Paillot R."/>
            <person name="Steward K.F."/>
            <person name="Webb K."/>
            <person name="Ainslie F."/>
            <person name="Jourdan T."/>
            <person name="Bason N.C."/>
            <person name="Holroyd N.E."/>
            <person name="Mungall K."/>
            <person name="Quail M.A."/>
            <person name="Sanders M."/>
            <person name="Simmonds M."/>
            <person name="Willey D."/>
            <person name="Brooks K."/>
            <person name="Aanensen D.M."/>
            <person name="Spratt B.G."/>
            <person name="Jolley K.A."/>
            <person name="Maiden M.C.J."/>
            <person name="Kehoe M."/>
            <person name="Chanter N."/>
            <person name="Bentley S.D."/>
            <person name="Robinson C."/>
            <person name="Maskell D.J."/>
            <person name="Parkhill J."/>
            <person name="Waller A.S."/>
        </authorList>
    </citation>
    <scope>NUCLEOTIDE SEQUENCE [LARGE SCALE GENOMIC DNA]</scope>
    <source>
        <strain>4047</strain>
    </source>
</reference>
<feature type="chain" id="PRO_1000180977" description="UPF0291 protein SEQ_0545">
    <location>
        <begin position="1"/>
        <end position="85"/>
    </location>
</feature>
<feature type="region of interest" description="Disordered" evidence="2">
    <location>
        <begin position="62"/>
        <end position="85"/>
    </location>
</feature>
<dbReference type="EMBL" id="FM204883">
    <property type="protein sequence ID" value="CAW92794.1"/>
    <property type="molecule type" value="Genomic_DNA"/>
</dbReference>
<dbReference type="RefSeq" id="WP_012515137.1">
    <property type="nucleotide sequence ID" value="NC_012471.1"/>
</dbReference>
<dbReference type="SMR" id="C0M9J8"/>
<dbReference type="KEGG" id="seu:SEQ_0545"/>
<dbReference type="HOGENOM" id="CLU_173137_0_2_9"/>
<dbReference type="OrthoDB" id="390105at2"/>
<dbReference type="Proteomes" id="UP000001365">
    <property type="component" value="Chromosome"/>
</dbReference>
<dbReference type="GO" id="GO:0005737">
    <property type="term" value="C:cytoplasm"/>
    <property type="evidence" value="ECO:0007669"/>
    <property type="project" value="UniProtKB-SubCell"/>
</dbReference>
<dbReference type="Gene3D" id="1.10.287.540">
    <property type="entry name" value="Helix hairpin bin"/>
    <property type="match status" value="1"/>
</dbReference>
<dbReference type="HAMAP" id="MF_01103">
    <property type="entry name" value="UPF0291"/>
    <property type="match status" value="1"/>
</dbReference>
<dbReference type="InterPro" id="IPR009242">
    <property type="entry name" value="DUF896"/>
</dbReference>
<dbReference type="NCBIfam" id="NF002711">
    <property type="entry name" value="PRK02539.1"/>
    <property type="match status" value="1"/>
</dbReference>
<dbReference type="PANTHER" id="PTHR37300">
    <property type="entry name" value="UPF0291 PROTEIN CBO2609/CLC_2481"/>
    <property type="match status" value="1"/>
</dbReference>
<dbReference type="PANTHER" id="PTHR37300:SF1">
    <property type="entry name" value="UPF0291 PROTEIN YNZC"/>
    <property type="match status" value="1"/>
</dbReference>
<dbReference type="Pfam" id="PF05979">
    <property type="entry name" value="DUF896"/>
    <property type="match status" value="1"/>
</dbReference>
<dbReference type="SUPFAM" id="SSF158221">
    <property type="entry name" value="YnzC-like"/>
    <property type="match status" value="1"/>
</dbReference>
<evidence type="ECO:0000255" key="1">
    <source>
        <dbReference type="HAMAP-Rule" id="MF_01103"/>
    </source>
</evidence>
<evidence type="ECO:0000256" key="2">
    <source>
        <dbReference type="SAM" id="MobiDB-lite"/>
    </source>
</evidence>
<comment type="subcellular location">
    <subcellularLocation>
        <location evidence="1">Cytoplasm</location>
    </subcellularLocation>
</comment>
<comment type="similarity">
    <text evidence="1">Belongs to the UPF0291 family.</text>
</comment>
<protein>
    <recommendedName>
        <fullName evidence="1">UPF0291 protein SEQ_0545</fullName>
    </recommendedName>
</protein>
<sequence length="85" mass="9788">MDPKKIARINELAKKKKTVGLTGPEKVEQAKLREEYIEGYRRSVRHHIEGIKIVDEDGNDVTPEKLRQVQREKGLHGRSLDDPES</sequence>
<accession>C0M9J8</accession>